<feature type="chain" id="PRO_0000149343" description="Adenine phosphoribosyltransferase">
    <location>
        <begin position="1"/>
        <end position="180"/>
    </location>
</feature>
<protein>
    <recommendedName>
        <fullName evidence="1">Adenine phosphoribosyltransferase</fullName>
        <shortName evidence="1">APRT</shortName>
        <ecNumber evidence="1">2.4.2.7</ecNumber>
    </recommendedName>
</protein>
<dbReference type="EC" id="2.4.2.7" evidence="1"/>
<dbReference type="EMBL" id="AE007869">
    <property type="protein sequence ID" value="AAK87978.2"/>
    <property type="molecule type" value="Genomic_DNA"/>
</dbReference>
<dbReference type="PIR" id="A97628">
    <property type="entry name" value="A97628"/>
</dbReference>
<dbReference type="PIR" id="AC2851">
    <property type="entry name" value="AC2851"/>
</dbReference>
<dbReference type="RefSeq" id="NP_355193.2">
    <property type="nucleotide sequence ID" value="NC_003062.2"/>
</dbReference>
<dbReference type="RefSeq" id="WP_010972163.1">
    <property type="nucleotide sequence ID" value="NC_003062.2"/>
</dbReference>
<dbReference type="SMR" id="Q8UD91"/>
<dbReference type="STRING" id="176299.Atu2236"/>
<dbReference type="EnsemblBacteria" id="AAK87978">
    <property type="protein sequence ID" value="AAK87978"/>
    <property type="gene ID" value="Atu2236"/>
</dbReference>
<dbReference type="GeneID" id="1134274"/>
<dbReference type="KEGG" id="atu:Atu2236"/>
<dbReference type="PATRIC" id="fig|176299.10.peg.2246"/>
<dbReference type="eggNOG" id="COG0503">
    <property type="taxonomic scope" value="Bacteria"/>
</dbReference>
<dbReference type="HOGENOM" id="CLU_063339_3_0_5"/>
<dbReference type="OrthoDB" id="9803963at2"/>
<dbReference type="PhylomeDB" id="Q8UD91"/>
<dbReference type="BioCyc" id="AGRO:ATU2236-MONOMER"/>
<dbReference type="UniPathway" id="UPA00588">
    <property type="reaction ID" value="UER00646"/>
</dbReference>
<dbReference type="Proteomes" id="UP000000813">
    <property type="component" value="Chromosome circular"/>
</dbReference>
<dbReference type="GO" id="GO:0005737">
    <property type="term" value="C:cytoplasm"/>
    <property type="evidence" value="ECO:0007669"/>
    <property type="project" value="UniProtKB-SubCell"/>
</dbReference>
<dbReference type="GO" id="GO:0002055">
    <property type="term" value="F:adenine binding"/>
    <property type="evidence" value="ECO:0007669"/>
    <property type="project" value="TreeGrafter"/>
</dbReference>
<dbReference type="GO" id="GO:0003999">
    <property type="term" value="F:adenine phosphoribosyltransferase activity"/>
    <property type="evidence" value="ECO:0007669"/>
    <property type="project" value="UniProtKB-UniRule"/>
</dbReference>
<dbReference type="GO" id="GO:0016208">
    <property type="term" value="F:AMP binding"/>
    <property type="evidence" value="ECO:0007669"/>
    <property type="project" value="TreeGrafter"/>
</dbReference>
<dbReference type="GO" id="GO:0006168">
    <property type="term" value="P:adenine salvage"/>
    <property type="evidence" value="ECO:0007669"/>
    <property type="project" value="InterPro"/>
</dbReference>
<dbReference type="GO" id="GO:0044209">
    <property type="term" value="P:AMP salvage"/>
    <property type="evidence" value="ECO:0007669"/>
    <property type="project" value="UniProtKB-UniRule"/>
</dbReference>
<dbReference type="GO" id="GO:0006166">
    <property type="term" value="P:purine ribonucleoside salvage"/>
    <property type="evidence" value="ECO:0007669"/>
    <property type="project" value="UniProtKB-KW"/>
</dbReference>
<dbReference type="CDD" id="cd06223">
    <property type="entry name" value="PRTases_typeI"/>
    <property type="match status" value="1"/>
</dbReference>
<dbReference type="FunFam" id="3.40.50.2020:FF:000021">
    <property type="entry name" value="Adenine phosphoribosyltransferase"/>
    <property type="match status" value="1"/>
</dbReference>
<dbReference type="Gene3D" id="3.40.50.2020">
    <property type="match status" value="1"/>
</dbReference>
<dbReference type="HAMAP" id="MF_00004">
    <property type="entry name" value="Aden_phosphoribosyltr"/>
    <property type="match status" value="1"/>
</dbReference>
<dbReference type="InterPro" id="IPR005764">
    <property type="entry name" value="Ade_phspho_trans"/>
</dbReference>
<dbReference type="InterPro" id="IPR000836">
    <property type="entry name" value="PRibTrfase_dom"/>
</dbReference>
<dbReference type="InterPro" id="IPR029057">
    <property type="entry name" value="PRTase-like"/>
</dbReference>
<dbReference type="InterPro" id="IPR050054">
    <property type="entry name" value="UPRTase/APRTase"/>
</dbReference>
<dbReference type="NCBIfam" id="TIGR01090">
    <property type="entry name" value="apt"/>
    <property type="match status" value="1"/>
</dbReference>
<dbReference type="NCBIfam" id="NF002634">
    <property type="entry name" value="PRK02304.1-3"/>
    <property type="match status" value="1"/>
</dbReference>
<dbReference type="NCBIfam" id="NF002636">
    <property type="entry name" value="PRK02304.1-5"/>
    <property type="match status" value="1"/>
</dbReference>
<dbReference type="PANTHER" id="PTHR32315">
    <property type="entry name" value="ADENINE PHOSPHORIBOSYLTRANSFERASE"/>
    <property type="match status" value="1"/>
</dbReference>
<dbReference type="PANTHER" id="PTHR32315:SF3">
    <property type="entry name" value="ADENINE PHOSPHORIBOSYLTRANSFERASE"/>
    <property type="match status" value="1"/>
</dbReference>
<dbReference type="Pfam" id="PF00156">
    <property type="entry name" value="Pribosyltran"/>
    <property type="match status" value="1"/>
</dbReference>
<dbReference type="SUPFAM" id="SSF53271">
    <property type="entry name" value="PRTase-like"/>
    <property type="match status" value="1"/>
</dbReference>
<dbReference type="PROSITE" id="PS00103">
    <property type="entry name" value="PUR_PYR_PR_TRANSFER"/>
    <property type="match status" value="1"/>
</dbReference>
<reference key="1">
    <citation type="journal article" date="2001" name="Science">
        <title>The genome of the natural genetic engineer Agrobacterium tumefaciens C58.</title>
        <authorList>
            <person name="Wood D.W."/>
            <person name="Setubal J.C."/>
            <person name="Kaul R."/>
            <person name="Monks D.E."/>
            <person name="Kitajima J.P."/>
            <person name="Okura V.K."/>
            <person name="Zhou Y."/>
            <person name="Chen L."/>
            <person name="Wood G.E."/>
            <person name="Almeida N.F. Jr."/>
            <person name="Woo L."/>
            <person name="Chen Y."/>
            <person name="Paulsen I.T."/>
            <person name="Eisen J.A."/>
            <person name="Karp P.D."/>
            <person name="Bovee D. Sr."/>
            <person name="Chapman P."/>
            <person name="Clendenning J."/>
            <person name="Deatherage G."/>
            <person name="Gillet W."/>
            <person name="Grant C."/>
            <person name="Kutyavin T."/>
            <person name="Levy R."/>
            <person name="Li M.-J."/>
            <person name="McClelland E."/>
            <person name="Palmieri A."/>
            <person name="Raymond C."/>
            <person name="Rouse G."/>
            <person name="Saenphimmachak C."/>
            <person name="Wu Z."/>
            <person name="Romero P."/>
            <person name="Gordon D."/>
            <person name="Zhang S."/>
            <person name="Yoo H."/>
            <person name="Tao Y."/>
            <person name="Biddle P."/>
            <person name="Jung M."/>
            <person name="Krespan W."/>
            <person name="Perry M."/>
            <person name="Gordon-Kamm B."/>
            <person name="Liao L."/>
            <person name="Kim S."/>
            <person name="Hendrick C."/>
            <person name="Zhao Z.-Y."/>
            <person name="Dolan M."/>
            <person name="Chumley F."/>
            <person name="Tingey S.V."/>
            <person name="Tomb J.-F."/>
            <person name="Gordon M.P."/>
            <person name="Olson M.V."/>
            <person name="Nester E.W."/>
        </authorList>
    </citation>
    <scope>NUCLEOTIDE SEQUENCE [LARGE SCALE GENOMIC DNA]</scope>
    <source>
        <strain>C58 / ATCC 33970</strain>
    </source>
</reference>
<reference key="2">
    <citation type="journal article" date="2001" name="Science">
        <title>Genome sequence of the plant pathogen and biotechnology agent Agrobacterium tumefaciens C58.</title>
        <authorList>
            <person name="Goodner B."/>
            <person name="Hinkle G."/>
            <person name="Gattung S."/>
            <person name="Miller N."/>
            <person name="Blanchard M."/>
            <person name="Qurollo B."/>
            <person name="Goldman B.S."/>
            <person name="Cao Y."/>
            <person name="Askenazi M."/>
            <person name="Halling C."/>
            <person name="Mullin L."/>
            <person name="Houmiel K."/>
            <person name="Gordon J."/>
            <person name="Vaudin M."/>
            <person name="Iartchouk O."/>
            <person name="Epp A."/>
            <person name="Liu F."/>
            <person name="Wollam C."/>
            <person name="Allinger M."/>
            <person name="Doughty D."/>
            <person name="Scott C."/>
            <person name="Lappas C."/>
            <person name="Markelz B."/>
            <person name="Flanagan C."/>
            <person name="Crowell C."/>
            <person name="Gurson J."/>
            <person name="Lomo C."/>
            <person name="Sear C."/>
            <person name="Strub G."/>
            <person name="Cielo C."/>
            <person name="Slater S."/>
        </authorList>
    </citation>
    <scope>NUCLEOTIDE SEQUENCE [LARGE SCALE GENOMIC DNA]</scope>
    <source>
        <strain>C58 / ATCC 33970</strain>
    </source>
</reference>
<accession>Q8UD91</accession>
<organism>
    <name type="scientific">Agrobacterium fabrum (strain C58 / ATCC 33970)</name>
    <name type="common">Agrobacterium tumefaciens (strain C58)</name>
    <dbReference type="NCBI Taxonomy" id="176299"/>
    <lineage>
        <taxon>Bacteria</taxon>
        <taxon>Pseudomonadati</taxon>
        <taxon>Pseudomonadota</taxon>
        <taxon>Alphaproteobacteria</taxon>
        <taxon>Hyphomicrobiales</taxon>
        <taxon>Rhizobiaceae</taxon>
        <taxon>Rhizobium/Agrobacterium group</taxon>
        <taxon>Agrobacterium</taxon>
        <taxon>Agrobacterium tumefaciens complex</taxon>
    </lineage>
</organism>
<sequence length="180" mass="19338">MTVIASELSAAIRSIPDYPKPGIIFRDITTLLGNPRAFRRAVDELVQPYAGTKIDKIAGMEARGFILGGAVAHQLSAGFVPIRKKGKLPHTTVRVAYSLEYGVDEMEMHVDAVQPGEKVILVDDLIATGGTAEGAVKLLRQMGAEIVSACFVIDLPDLGGRKKLEDLGVDVRTLVEFSGH</sequence>
<gene>
    <name evidence="1" type="primary">apt</name>
    <name type="ordered locus">Atu2236</name>
    <name type="ORF">AGR_C_4069</name>
</gene>
<proteinExistence type="inferred from homology"/>
<keyword id="KW-0963">Cytoplasm</keyword>
<keyword id="KW-0328">Glycosyltransferase</keyword>
<keyword id="KW-0660">Purine salvage</keyword>
<keyword id="KW-1185">Reference proteome</keyword>
<keyword id="KW-0808">Transferase</keyword>
<comment type="function">
    <text evidence="1">Catalyzes a salvage reaction resulting in the formation of AMP, that is energically less costly than de novo synthesis.</text>
</comment>
<comment type="catalytic activity">
    <reaction evidence="1">
        <text>AMP + diphosphate = 5-phospho-alpha-D-ribose 1-diphosphate + adenine</text>
        <dbReference type="Rhea" id="RHEA:16609"/>
        <dbReference type="ChEBI" id="CHEBI:16708"/>
        <dbReference type="ChEBI" id="CHEBI:33019"/>
        <dbReference type="ChEBI" id="CHEBI:58017"/>
        <dbReference type="ChEBI" id="CHEBI:456215"/>
        <dbReference type="EC" id="2.4.2.7"/>
    </reaction>
</comment>
<comment type="pathway">
    <text evidence="1">Purine metabolism; AMP biosynthesis via salvage pathway; AMP from adenine: step 1/1.</text>
</comment>
<comment type="subunit">
    <text evidence="1">Homodimer.</text>
</comment>
<comment type="subcellular location">
    <subcellularLocation>
        <location evidence="1">Cytoplasm</location>
    </subcellularLocation>
</comment>
<comment type="similarity">
    <text evidence="1">Belongs to the purine/pyrimidine phosphoribosyltransferase family.</text>
</comment>
<name>APT_AGRFC</name>
<evidence type="ECO:0000255" key="1">
    <source>
        <dbReference type="HAMAP-Rule" id="MF_00004"/>
    </source>
</evidence>